<dbReference type="EMBL" id="AE017223">
    <property type="protein sequence ID" value="AAX75055.1"/>
    <property type="molecule type" value="Genomic_DNA"/>
</dbReference>
<dbReference type="RefSeq" id="WP_002964837.1">
    <property type="nucleotide sequence ID" value="NC_006932.1"/>
</dbReference>
<dbReference type="SMR" id="Q57BC9"/>
<dbReference type="EnsemblBacteria" id="AAX75055">
    <property type="protein sequence ID" value="AAX75055"/>
    <property type="gene ID" value="BruAb1_1737"/>
</dbReference>
<dbReference type="KEGG" id="bmb:BruAb1_1737"/>
<dbReference type="HOGENOM" id="CLU_158651_3_0_5"/>
<dbReference type="Proteomes" id="UP000000540">
    <property type="component" value="Chromosome I"/>
</dbReference>
<dbReference type="GO" id="GO:0003677">
    <property type="term" value="F:DNA binding"/>
    <property type="evidence" value="ECO:0007669"/>
    <property type="project" value="InterPro"/>
</dbReference>
<dbReference type="HAMAP" id="MF_00797">
    <property type="entry name" value="UPF0335"/>
    <property type="match status" value="1"/>
</dbReference>
<dbReference type="InterPro" id="IPR018753">
    <property type="entry name" value="GapR-like"/>
</dbReference>
<dbReference type="InterPro" id="IPR046367">
    <property type="entry name" value="GapR-like_DNA-bd"/>
</dbReference>
<dbReference type="NCBIfam" id="NF010247">
    <property type="entry name" value="PRK13694.1"/>
    <property type="match status" value="1"/>
</dbReference>
<dbReference type="Pfam" id="PF10073">
    <property type="entry name" value="GapR_DNA-bd"/>
    <property type="match status" value="1"/>
</dbReference>
<protein>
    <recommendedName>
        <fullName evidence="1">UPF0335 protein BruAb1_1737</fullName>
    </recommendedName>
</protein>
<evidence type="ECO:0000255" key="1">
    <source>
        <dbReference type="HAMAP-Rule" id="MF_00797"/>
    </source>
</evidence>
<proteinExistence type="inferred from homology"/>
<feature type="chain" id="PRO_1000046958" description="UPF0335 protein BruAb1_1737">
    <location>
        <begin position="1"/>
        <end position="86"/>
    </location>
</feature>
<sequence>MSDDITSEAQTIAVGQLRAFIERIERLEEEKKTIGDDIKEVYAELKGSGFDSKVVRTIIRLRKKEDHERQEEEAMLQLYMDALGMS</sequence>
<reference key="1">
    <citation type="journal article" date="2005" name="J. Bacteriol.">
        <title>Completion of the genome sequence of Brucella abortus and comparison to the highly similar genomes of Brucella melitensis and Brucella suis.</title>
        <authorList>
            <person name="Halling S.M."/>
            <person name="Peterson-Burch B.D."/>
            <person name="Bricker B.J."/>
            <person name="Zuerner R.L."/>
            <person name="Qing Z."/>
            <person name="Li L.-L."/>
            <person name="Kapur V."/>
            <person name="Alt D.P."/>
            <person name="Olsen S.C."/>
        </authorList>
    </citation>
    <scope>NUCLEOTIDE SEQUENCE [LARGE SCALE GENOMIC DNA]</scope>
    <source>
        <strain>9-941</strain>
    </source>
</reference>
<gene>
    <name type="ordered locus">BruAb1_1737</name>
</gene>
<name>Y1737_BRUAB</name>
<comment type="similarity">
    <text evidence="1">Belongs to the UPF0335 family.</text>
</comment>
<accession>Q57BC9</accession>
<organism>
    <name type="scientific">Brucella abortus biovar 1 (strain 9-941)</name>
    <dbReference type="NCBI Taxonomy" id="262698"/>
    <lineage>
        <taxon>Bacteria</taxon>
        <taxon>Pseudomonadati</taxon>
        <taxon>Pseudomonadota</taxon>
        <taxon>Alphaproteobacteria</taxon>
        <taxon>Hyphomicrobiales</taxon>
        <taxon>Brucellaceae</taxon>
        <taxon>Brucella/Ochrobactrum group</taxon>
        <taxon>Brucella</taxon>
    </lineage>
</organism>